<name>SECB_SALEP</name>
<sequence length="155" mass="17245">MSEQNNTEMAFQIQRIYTKDVSFEAPNAPHVFQKDWQPEVKLDLDTASSQLADDVYEVVLRVTVTASLGEETAFLCEVQQAGIFSISGIEGTQMAHCLGAYCPNILFPYARECITSLVSRGTFPQLNLAPVNFDALFMNYLQQQAGEGTEEHQDA</sequence>
<comment type="function">
    <text evidence="1">One of the proteins required for the normal export of preproteins out of the cell cytoplasm. It is a molecular chaperone that binds to a subset of precursor proteins, maintaining them in a translocation-competent state. It also specifically binds to its receptor SecA.</text>
</comment>
<comment type="subunit">
    <text evidence="1">Homotetramer, a dimer of dimers. One homotetramer interacts with 1 SecA dimer.</text>
</comment>
<comment type="subcellular location">
    <subcellularLocation>
        <location evidence="1">Cytoplasm</location>
    </subcellularLocation>
</comment>
<comment type="similarity">
    <text evidence="1">Belongs to the SecB family.</text>
</comment>
<organism>
    <name type="scientific">Salmonella enteritidis PT4 (strain P125109)</name>
    <dbReference type="NCBI Taxonomy" id="550537"/>
    <lineage>
        <taxon>Bacteria</taxon>
        <taxon>Pseudomonadati</taxon>
        <taxon>Pseudomonadota</taxon>
        <taxon>Gammaproteobacteria</taxon>
        <taxon>Enterobacterales</taxon>
        <taxon>Enterobacteriaceae</taxon>
        <taxon>Salmonella</taxon>
    </lineage>
</organism>
<gene>
    <name evidence="1" type="primary">secB</name>
    <name type="ordered locus">SEN3523</name>
</gene>
<reference key="1">
    <citation type="journal article" date="2008" name="Genome Res.">
        <title>Comparative genome analysis of Salmonella enteritidis PT4 and Salmonella gallinarum 287/91 provides insights into evolutionary and host adaptation pathways.</title>
        <authorList>
            <person name="Thomson N.R."/>
            <person name="Clayton D.J."/>
            <person name="Windhorst D."/>
            <person name="Vernikos G."/>
            <person name="Davidson S."/>
            <person name="Churcher C."/>
            <person name="Quail M.A."/>
            <person name="Stevens M."/>
            <person name="Jones M.A."/>
            <person name="Watson M."/>
            <person name="Barron A."/>
            <person name="Layton A."/>
            <person name="Pickard D."/>
            <person name="Kingsley R.A."/>
            <person name="Bignell A."/>
            <person name="Clark L."/>
            <person name="Harris B."/>
            <person name="Ormond D."/>
            <person name="Abdellah Z."/>
            <person name="Brooks K."/>
            <person name="Cherevach I."/>
            <person name="Chillingworth T."/>
            <person name="Woodward J."/>
            <person name="Norberczak H."/>
            <person name="Lord A."/>
            <person name="Arrowsmith C."/>
            <person name="Jagels K."/>
            <person name="Moule S."/>
            <person name="Mungall K."/>
            <person name="Saunders M."/>
            <person name="Whitehead S."/>
            <person name="Chabalgoity J.A."/>
            <person name="Maskell D."/>
            <person name="Humphreys T."/>
            <person name="Roberts M."/>
            <person name="Barrow P.A."/>
            <person name="Dougan G."/>
            <person name="Parkhill J."/>
        </authorList>
    </citation>
    <scope>NUCLEOTIDE SEQUENCE [LARGE SCALE GENOMIC DNA]</scope>
    <source>
        <strain>P125109</strain>
    </source>
</reference>
<keyword id="KW-0143">Chaperone</keyword>
<keyword id="KW-0963">Cytoplasm</keyword>
<keyword id="KW-0653">Protein transport</keyword>
<keyword id="KW-0811">Translocation</keyword>
<keyword id="KW-0813">Transport</keyword>
<proteinExistence type="inferred from homology"/>
<feature type="chain" id="PRO_1000195341" description="Protein-export protein SecB">
    <location>
        <begin position="1"/>
        <end position="155"/>
    </location>
</feature>
<evidence type="ECO:0000255" key="1">
    <source>
        <dbReference type="HAMAP-Rule" id="MF_00821"/>
    </source>
</evidence>
<protein>
    <recommendedName>
        <fullName evidence="1">Protein-export protein SecB</fullName>
    </recommendedName>
</protein>
<dbReference type="EMBL" id="AM933172">
    <property type="protein sequence ID" value="CAR35102.1"/>
    <property type="molecule type" value="Genomic_DNA"/>
</dbReference>
<dbReference type="RefSeq" id="WP_000003370.1">
    <property type="nucleotide sequence ID" value="NC_011294.1"/>
</dbReference>
<dbReference type="SMR" id="B5R5D4"/>
<dbReference type="KEGG" id="set:SEN3523"/>
<dbReference type="HOGENOM" id="CLU_111574_1_0_6"/>
<dbReference type="Proteomes" id="UP000000613">
    <property type="component" value="Chromosome"/>
</dbReference>
<dbReference type="GO" id="GO:0005737">
    <property type="term" value="C:cytoplasm"/>
    <property type="evidence" value="ECO:0007669"/>
    <property type="project" value="UniProtKB-SubCell"/>
</dbReference>
<dbReference type="GO" id="GO:0051082">
    <property type="term" value="F:unfolded protein binding"/>
    <property type="evidence" value="ECO:0007669"/>
    <property type="project" value="InterPro"/>
</dbReference>
<dbReference type="GO" id="GO:0006457">
    <property type="term" value="P:protein folding"/>
    <property type="evidence" value="ECO:0007669"/>
    <property type="project" value="UniProtKB-UniRule"/>
</dbReference>
<dbReference type="GO" id="GO:0051262">
    <property type="term" value="P:protein tetramerization"/>
    <property type="evidence" value="ECO:0007669"/>
    <property type="project" value="InterPro"/>
</dbReference>
<dbReference type="GO" id="GO:0015031">
    <property type="term" value="P:protein transport"/>
    <property type="evidence" value="ECO:0007669"/>
    <property type="project" value="UniProtKB-UniRule"/>
</dbReference>
<dbReference type="CDD" id="cd00557">
    <property type="entry name" value="Translocase_SecB"/>
    <property type="match status" value="1"/>
</dbReference>
<dbReference type="FunFam" id="3.10.420.10:FF:000001">
    <property type="entry name" value="Protein-export chaperone SecB"/>
    <property type="match status" value="1"/>
</dbReference>
<dbReference type="Gene3D" id="3.10.420.10">
    <property type="entry name" value="SecB-like"/>
    <property type="match status" value="1"/>
</dbReference>
<dbReference type="HAMAP" id="MF_00821">
    <property type="entry name" value="SecB"/>
    <property type="match status" value="1"/>
</dbReference>
<dbReference type="InterPro" id="IPR003708">
    <property type="entry name" value="SecB"/>
</dbReference>
<dbReference type="InterPro" id="IPR035958">
    <property type="entry name" value="SecB-like_sf"/>
</dbReference>
<dbReference type="NCBIfam" id="NF004390">
    <property type="entry name" value="PRK05751.1-1"/>
    <property type="match status" value="1"/>
</dbReference>
<dbReference type="NCBIfam" id="NF004393">
    <property type="entry name" value="PRK05751.1-4"/>
    <property type="match status" value="1"/>
</dbReference>
<dbReference type="NCBIfam" id="TIGR00809">
    <property type="entry name" value="secB"/>
    <property type="match status" value="1"/>
</dbReference>
<dbReference type="PANTHER" id="PTHR36918">
    <property type="match status" value="1"/>
</dbReference>
<dbReference type="PANTHER" id="PTHR36918:SF1">
    <property type="entry name" value="PROTEIN-EXPORT PROTEIN SECB"/>
    <property type="match status" value="1"/>
</dbReference>
<dbReference type="Pfam" id="PF02556">
    <property type="entry name" value="SecB"/>
    <property type="match status" value="1"/>
</dbReference>
<dbReference type="PRINTS" id="PR01594">
    <property type="entry name" value="SECBCHAPRONE"/>
</dbReference>
<dbReference type="SUPFAM" id="SSF54611">
    <property type="entry name" value="SecB-like"/>
    <property type="match status" value="1"/>
</dbReference>
<accession>B5R5D4</accession>